<keyword id="KW-1185">Reference proteome</keyword>
<name>HGH1_XENTR</name>
<sequence length="359" mass="40145">MDPALCLELLSFLKPETRADVRAQALEYILGVSGSPEGRQSLCAEPRLLCALLDLSTEQSPHVAQDAHHVLVNLTSDCAAHRALLAHVPTLLPSMLSRLRDPGCPFADSICTALCNLSREEETCQSFLRSLTQEGMCQLLDMLCAPKYNPRASLDYLGPLLCNLTQLPEGRHFILDRNRCVVQRLLPYLQSGSTVRRGGIVGTLRNCCFSHRDHAWLLGDDVDLLPFLLLPLAGGEEFTEEEMETLPPDLQYLAEDKQREADPDIRKMLIETVLLLCATADGRRLVKQRGTYLVMRELHSWEREPCVKRACEKLIQMLIGEEPEAGLENLLEVTVPPDLEETLSRLDKEEEGPQGTLVQ</sequence>
<evidence type="ECO:0000305" key="1"/>
<dbReference type="EMBL" id="BC080354">
    <property type="protein sequence ID" value="AAH80354.1"/>
    <property type="molecule type" value="mRNA"/>
</dbReference>
<dbReference type="RefSeq" id="NP_001007916.1">
    <property type="nucleotide sequence ID" value="NM_001007915.1"/>
</dbReference>
<dbReference type="SMR" id="Q66KK3"/>
<dbReference type="FunCoup" id="Q66KK3">
    <property type="interactions" value="701"/>
</dbReference>
<dbReference type="STRING" id="8364.ENSXETP00000001614"/>
<dbReference type="DNASU" id="493297"/>
<dbReference type="GeneID" id="493297"/>
<dbReference type="KEGG" id="xtr:493297"/>
<dbReference type="AGR" id="Xenbase:XB-GENE-997807"/>
<dbReference type="CTD" id="51236"/>
<dbReference type="Xenbase" id="XB-GENE-997807">
    <property type="gene designation" value="hgh1"/>
</dbReference>
<dbReference type="InParanoid" id="Q66KK3"/>
<dbReference type="OMA" id="MCILLTN"/>
<dbReference type="OrthoDB" id="338814at2759"/>
<dbReference type="Proteomes" id="UP000008143">
    <property type="component" value="Chromosome 6"/>
</dbReference>
<dbReference type="Gene3D" id="1.25.10.10">
    <property type="entry name" value="Leucine-rich Repeat Variant"/>
    <property type="match status" value="1"/>
</dbReference>
<dbReference type="InterPro" id="IPR011989">
    <property type="entry name" value="ARM-like"/>
</dbReference>
<dbReference type="InterPro" id="IPR016024">
    <property type="entry name" value="ARM-type_fold"/>
</dbReference>
<dbReference type="InterPro" id="IPR039717">
    <property type="entry name" value="Hgh1"/>
</dbReference>
<dbReference type="InterPro" id="IPR007206">
    <property type="entry name" value="Protein_HGH1_C"/>
</dbReference>
<dbReference type="InterPro" id="IPR007205">
    <property type="entry name" value="Protein_HGH1_N"/>
</dbReference>
<dbReference type="PANTHER" id="PTHR13387">
    <property type="entry name" value="PROTEIN HGH1 HOMOLOG"/>
    <property type="match status" value="1"/>
</dbReference>
<dbReference type="PANTHER" id="PTHR13387:SF9">
    <property type="entry name" value="PROTEIN HGH1 HOMOLOG"/>
    <property type="match status" value="1"/>
</dbReference>
<dbReference type="Pfam" id="PF04063">
    <property type="entry name" value="DUF383"/>
    <property type="match status" value="1"/>
</dbReference>
<dbReference type="Pfam" id="PF04064">
    <property type="entry name" value="DUF384"/>
    <property type="match status" value="1"/>
</dbReference>
<dbReference type="SUPFAM" id="SSF48371">
    <property type="entry name" value="ARM repeat"/>
    <property type="match status" value="1"/>
</dbReference>
<accession>Q66KK3</accession>
<protein>
    <recommendedName>
        <fullName>Protein HGH1 homolog</fullName>
    </recommendedName>
</protein>
<comment type="similarity">
    <text evidence="1">Belongs to the HGH1 family.</text>
</comment>
<proteinExistence type="evidence at transcript level"/>
<organism>
    <name type="scientific">Xenopus tropicalis</name>
    <name type="common">Western clawed frog</name>
    <name type="synonym">Silurana tropicalis</name>
    <dbReference type="NCBI Taxonomy" id="8364"/>
    <lineage>
        <taxon>Eukaryota</taxon>
        <taxon>Metazoa</taxon>
        <taxon>Chordata</taxon>
        <taxon>Craniata</taxon>
        <taxon>Vertebrata</taxon>
        <taxon>Euteleostomi</taxon>
        <taxon>Amphibia</taxon>
        <taxon>Batrachia</taxon>
        <taxon>Anura</taxon>
        <taxon>Pipoidea</taxon>
        <taxon>Pipidae</taxon>
        <taxon>Xenopodinae</taxon>
        <taxon>Xenopus</taxon>
        <taxon>Silurana</taxon>
    </lineage>
</organism>
<reference key="1">
    <citation type="submission" date="2004-08" db="EMBL/GenBank/DDBJ databases">
        <authorList>
            <consortium name="NIH - Xenopus Gene Collection (XGC) project"/>
        </authorList>
    </citation>
    <scope>NUCLEOTIDE SEQUENCE [LARGE SCALE MRNA]</scope>
    <source>
        <tissue>Embryo</tissue>
    </source>
</reference>
<feature type="chain" id="PRO_0000331582" description="Protein HGH1 homolog">
    <location>
        <begin position="1"/>
        <end position="359"/>
    </location>
</feature>
<gene>
    <name type="primary">hgh1</name>
    <name type="synonym">fam203a</name>
</gene>